<reference key="1">
    <citation type="submission" date="2007-06" db="EMBL/GenBank/DDBJ databases">
        <title>Complete sequence of Methanococcus aeolicus Nankai-3.</title>
        <authorList>
            <consortium name="US DOE Joint Genome Institute"/>
            <person name="Copeland A."/>
            <person name="Lucas S."/>
            <person name="Lapidus A."/>
            <person name="Barry K."/>
            <person name="Glavina del Rio T."/>
            <person name="Dalin E."/>
            <person name="Tice H."/>
            <person name="Pitluck S."/>
            <person name="Chain P."/>
            <person name="Malfatti S."/>
            <person name="Shin M."/>
            <person name="Vergez L."/>
            <person name="Schmutz J."/>
            <person name="Larimer F."/>
            <person name="Land M."/>
            <person name="Hauser L."/>
            <person name="Kyrpides N."/>
            <person name="Lykidis A."/>
            <person name="Sieprawska-Lupa M."/>
            <person name="Whitman W.B."/>
            <person name="Richardson P."/>
        </authorList>
    </citation>
    <scope>NUCLEOTIDE SEQUENCE [LARGE SCALE GENOMIC DNA]</scope>
    <source>
        <strain>ATCC BAA-1280 / DSM 17508 / OCM 812 / Nankai-3</strain>
    </source>
</reference>
<proteinExistence type="inferred from homology"/>
<organism>
    <name type="scientific">Methanococcus aeolicus (strain ATCC BAA-1280 / DSM 17508 / OCM 812 / Nankai-3)</name>
    <dbReference type="NCBI Taxonomy" id="419665"/>
    <lineage>
        <taxon>Archaea</taxon>
        <taxon>Methanobacteriati</taxon>
        <taxon>Methanobacteriota</taxon>
        <taxon>Methanomada group</taxon>
        <taxon>Methanococci</taxon>
        <taxon>Methanococcales</taxon>
        <taxon>Methanococcaceae</taxon>
        <taxon>Methanococcus</taxon>
    </lineage>
</organism>
<protein>
    <recommendedName>
        <fullName evidence="1">Small ribosomal subunit protein uS7</fullName>
    </recommendedName>
    <alternativeName>
        <fullName evidence="2">30S ribosomal protein S7</fullName>
    </alternativeName>
</protein>
<sequence>MEIKLFNKWDTTEIVVKDPSLRHYINLEPIFVPHTSGRNSGRMFEKAKMNIVERLVNNLMRAEQNTGQKQVTLSIVEEAFEIIEKRTNENPVKVLVEALENGGPREETTRISYGGIAFLQSVDVSPSRRLDTALRNIAIGTLNSAHKNKKSAAQCLADEIMFASKADMQRSFAVRKKEEKERVAQSAR</sequence>
<gene>
    <name evidence="1" type="primary">rps7</name>
    <name type="ordered locus">Maeo_0784</name>
</gene>
<keyword id="KW-0687">Ribonucleoprotein</keyword>
<keyword id="KW-0689">Ribosomal protein</keyword>
<keyword id="KW-0694">RNA-binding</keyword>
<keyword id="KW-0699">rRNA-binding</keyword>
<feature type="chain" id="PRO_1000014226" description="Small ribosomal subunit protein uS7">
    <location>
        <begin position="1"/>
        <end position="188"/>
    </location>
</feature>
<name>RS7_META3</name>
<evidence type="ECO:0000255" key="1">
    <source>
        <dbReference type="HAMAP-Rule" id="MF_00480"/>
    </source>
</evidence>
<evidence type="ECO:0000305" key="2"/>
<dbReference type="EMBL" id="CP000743">
    <property type="protein sequence ID" value="ABR56367.1"/>
    <property type="molecule type" value="Genomic_DNA"/>
</dbReference>
<dbReference type="RefSeq" id="WP_011973499.1">
    <property type="nucleotide sequence ID" value="NC_009635.1"/>
</dbReference>
<dbReference type="SMR" id="A6UV45"/>
<dbReference type="STRING" id="419665.Maeo_0784"/>
<dbReference type="GeneID" id="5327705"/>
<dbReference type="KEGG" id="mae:Maeo_0784"/>
<dbReference type="eggNOG" id="arCOG04254">
    <property type="taxonomic scope" value="Archaea"/>
</dbReference>
<dbReference type="HOGENOM" id="CLU_063975_0_0_2"/>
<dbReference type="OrthoDB" id="45346at2157"/>
<dbReference type="Proteomes" id="UP000001106">
    <property type="component" value="Chromosome"/>
</dbReference>
<dbReference type="GO" id="GO:0015935">
    <property type="term" value="C:small ribosomal subunit"/>
    <property type="evidence" value="ECO:0007669"/>
    <property type="project" value="InterPro"/>
</dbReference>
<dbReference type="GO" id="GO:0019843">
    <property type="term" value="F:rRNA binding"/>
    <property type="evidence" value="ECO:0007669"/>
    <property type="project" value="UniProtKB-UniRule"/>
</dbReference>
<dbReference type="GO" id="GO:0003735">
    <property type="term" value="F:structural constituent of ribosome"/>
    <property type="evidence" value="ECO:0007669"/>
    <property type="project" value="InterPro"/>
</dbReference>
<dbReference type="GO" id="GO:0006412">
    <property type="term" value="P:translation"/>
    <property type="evidence" value="ECO:0007669"/>
    <property type="project" value="UniProtKB-UniRule"/>
</dbReference>
<dbReference type="CDD" id="cd14867">
    <property type="entry name" value="uS7_Eukaryote"/>
    <property type="match status" value="1"/>
</dbReference>
<dbReference type="Gene3D" id="1.10.455.10">
    <property type="entry name" value="Ribosomal protein S7 domain"/>
    <property type="match status" value="1"/>
</dbReference>
<dbReference type="HAMAP" id="MF_00480_A">
    <property type="entry name" value="Ribosomal_uS7_A"/>
    <property type="match status" value="1"/>
</dbReference>
<dbReference type="InterPro" id="IPR000235">
    <property type="entry name" value="Ribosomal_uS7"/>
</dbReference>
<dbReference type="InterPro" id="IPR026018">
    <property type="entry name" value="Ribosomal_uS7_arc"/>
</dbReference>
<dbReference type="InterPro" id="IPR023798">
    <property type="entry name" value="Ribosomal_uS7_dom"/>
</dbReference>
<dbReference type="InterPro" id="IPR036823">
    <property type="entry name" value="Ribosomal_uS7_dom_sf"/>
</dbReference>
<dbReference type="InterPro" id="IPR005716">
    <property type="entry name" value="Ribosomal_uS7_euk/arc"/>
</dbReference>
<dbReference type="NCBIfam" id="NF003106">
    <property type="entry name" value="PRK04027.1"/>
    <property type="match status" value="1"/>
</dbReference>
<dbReference type="NCBIfam" id="TIGR01028">
    <property type="entry name" value="uS7_euk_arch"/>
    <property type="match status" value="1"/>
</dbReference>
<dbReference type="PANTHER" id="PTHR11205">
    <property type="entry name" value="RIBOSOMAL PROTEIN S7"/>
    <property type="match status" value="1"/>
</dbReference>
<dbReference type="Pfam" id="PF00177">
    <property type="entry name" value="Ribosomal_S7"/>
    <property type="match status" value="1"/>
</dbReference>
<dbReference type="PIRSF" id="PIRSF002122">
    <property type="entry name" value="RPS7p_RPS7a_RPS5e_RPS7o"/>
    <property type="match status" value="1"/>
</dbReference>
<dbReference type="SUPFAM" id="SSF47973">
    <property type="entry name" value="Ribosomal protein S7"/>
    <property type="match status" value="1"/>
</dbReference>
<accession>A6UV45</accession>
<comment type="function">
    <text evidence="1">One of the primary rRNA binding proteins, it binds directly to 16S rRNA where it nucleates assembly of the head domain of the 30S subunit. Is located at the subunit interface close to the decoding center.</text>
</comment>
<comment type="subunit">
    <text evidence="1">Part of the 30S ribosomal subunit.</text>
</comment>
<comment type="similarity">
    <text evidence="1">Belongs to the universal ribosomal protein uS7 family.</text>
</comment>